<evidence type="ECO:0000250" key="1"/>
<evidence type="ECO:0000255" key="2"/>
<evidence type="ECO:0000255" key="3">
    <source>
        <dbReference type="PROSITE-ProRule" id="PRU01192"/>
    </source>
</evidence>
<evidence type="ECO:0000256" key="4">
    <source>
        <dbReference type="SAM" id="MobiDB-lite"/>
    </source>
</evidence>
<evidence type="ECO:0000269" key="5">
    <source>
    </source>
</evidence>
<evidence type="ECO:0000303" key="6">
    <source>
    </source>
</evidence>
<evidence type="ECO:0000305" key="7"/>
<organism>
    <name type="scientific">Dictyostelium discoideum</name>
    <name type="common">Social amoeba</name>
    <dbReference type="NCBI Taxonomy" id="44689"/>
    <lineage>
        <taxon>Eukaryota</taxon>
        <taxon>Amoebozoa</taxon>
        <taxon>Evosea</taxon>
        <taxon>Eumycetozoa</taxon>
        <taxon>Dictyostelia</taxon>
        <taxon>Dictyosteliales</taxon>
        <taxon>Dictyosteliaceae</taxon>
        <taxon>Dictyostelium</taxon>
    </lineage>
</organism>
<sequence>MFNNNNNDKINNTMMSNNPSGQIINLESIDCNSNLSNTTSIKDSNNNNNNNNNNNNNINNNINKINPNIDRKVLDDFNSKSIKIIDNKLNKKNSKKNLYSKEVDDDINKINLNKKIIPNETNSNNSNNNNNNSNNNNNNNNNNNNFNYNNNINSNNNIINNNNNINNNSNNNNNNNNNNSISLYVDTQEKSKKKVNAESLRGPIIFQNFILYTFFLIVIGTAEGTSWAPEIRVANFVPYCVMCVVLLEFNRLHKKPLLRIIFPLYTSNIPFAYMCIFSREARKYVLISLLFFASCLCIFLQSGIPDLRKHIVIFCIIFMINYGCCILFMDWFYIDTTGTKPYRGRILATKIHWGEEATILVSMALLGCIFIVLEKFIKSYARCVAEQHYQIQCLQKEKEKLQTEINISLKKLDLDTPIEKIMDILRSMINTSESENDKKQLIKVIAVLGSNKLYDPDFKFETCTDDAEVYSWLQSMLNREVGYSNVNNNNNMMMIENNNNNTIINNNLIEPTSPNFSKKLTSSDLIPRIRSMPEITDQGIQELIINNFLEWDFPVFQLSEITDGNPLFYMSYFLFSRHKFFEKFKIGIDCFKNFMRKIESGYDSTNPYHNSIHATDVLHNLNYFIEKSFGKFLTDIELFSMILAAIIHDFKHPGVNNHFQINSKSRLALKYNDKSILENYHLHQAFIIMNEPESGILLKLSDSVRKEIRETIIALVLSTDMAKHFNLVGRFKSMANSFPTTTNTQQPSSSSSSSSSTTIPTSTITPTPNSTTSTTTTTTTTTTTTNNNNNNNSNNNSLNNIINNCSSSNGSMGASGADNSNSNNTNNSNSNNQNQCGSSIFLNSNKKDRLLLMKISIKCADISNPSKPWNLYTNWSNRVTSEFYKQGDKEKESNMDVSAFMDRNKPATTKCQINFINIFVAPIYEIWSHHFPQFKLCYQNILSNLSRLEIEQQQQLQLQQQQQQQLQQQQQQQQQIHQQQQQQLHHHQQQQQFQHQQHQQQLQHQHQQQLNNQNQNQNQSNSNNSNSFGLTQSNYLIVV</sequence>
<dbReference type="EC" id="3.1.4.53" evidence="5"/>
<dbReference type="EMBL" id="AY211984">
    <property type="protein sequence ID" value="AAO59486.1"/>
    <property type="status" value="ALT_INIT"/>
    <property type="molecule type" value="mRNA"/>
</dbReference>
<dbReference type="EMBL" id="AAFI02000130">
    <property type="protein sequence ID" value="EAL62868.1"/>
    <property type="status" value="ALT_SEQ"/>
    <property type="molecule type" value="Genomic_DNA"/>
</dbReference>
<dbReference type="EMBL" id="AAFI02000130">
    <property type="protein sequence ID" value="EAL62884.1"/>
    <property type="status" value="ALT_SEQ"/>
    <property type="molecule type" value="Genomic_DNA"/>
</dbReference>
<dbReference type="RefSeq" id="XP_636379.1">
    <property type="nucleotide sequence ID" value="XM_631287.1"/>
</dbReference>
<dbReference type="RefSeq" id="XP_636380.1">
    <property type="nucleotide sequence ID" value="XM_631288.1"/>
</dbReference>
<dbReference type="SMR" id="Q86H13"/>
<dbReference type="FunCoup" id="Q86H13">
    <property type="interactions" value="1"/>
</dbReference>
<dbReference type="STRING" id="44689.Q86H13"/>
<dbReference type="GlyCosmos" id="Q86H13">
    <property type="glycosylation" value="23 sites, No reported glycans"/>
</dbReference>
<dbReference type="GlyGen" id="Q86H13">
    <property type="glycosylation" value="23 sites"/>
</dbReference>
<dbReference type="PaxDb" id="44689-DDB0216197"/>
<dbReference type="EnsemblProtists" id="EAL62868">
    <property type="protein sequence ID" value="EAL62868"/>
    <property type="gene ID" value="DDB_G0289121"/>
</dbReference>
<dbReference type="EnsemblProtists" id="EAL62884">
    <property type="protein sequence ID" value="EAL62884"/>
    <property type="gene ID" value="DDB_G0289153"/>
</dbReference>
<dbReference type="GeneID" id="8626981"/>
<dbReference type="KEGG" id="ddi:DDB_G0289121"/>
<dbReference type="KEGG" id="ddi:DDB_G0289153"/>
<dbReference type="dictyBase" id="DDB_G0289121">
    <property type="gene designation" value="pde4"/>
</dbReference>
<dbReference type="VEuPathDB" id="AmoebaDB:DDB_G0289121"/>
<dbReference type="VEuPathDB" id="AmoebaDB:DDB_G0289153"/>
<dbReference type="eggNOG" id="KOG3688">
    <property type="taxonomic scope" value="Eukaryota"/>
</dbReference>
<dbReference type="eggNOG" id="KOG3689">
    <property type="taxonomic scope" value="Eukaryota"/>
</dbReference>
<dbReference type="InParanoid" id="Q86H13"/>
<dbReference type="PhylomeDB" id="Q86H13"/>
<dbReference type="BRENDA" id="3.1.4.53">
    <property type="organism ID" value="1939"/>
</dbReference>
<dbReference type="Reactome" id="R-DDI-111957">
    <property type="pathway name" value="Cam-PDE 1 activation"/>
</dbReference>
<dbReference type="Reactome" id="R-DDI-165160">
    <property type="pathway name" value="PDE3B signalling"/>
</dbReference>
<dbReference type="Reactome" id="R-DDI-180024">
    <property type="pathway name" value="DARPP-32 events"/>
</dbReference>
<dbReference type="Reactome" id="R-DDI-418457">
    <property type="pathway name" value="cGMP effects"/>
</dbReference>
<dbReference type="Reactome" id="R-DDI-418555">
    <property type="pathway name" value="G alpha (s) signalling events"/>
</dbReference>
<dbReference type="SABIO-RK" id="Q86H13"/>
<dbReference type="PRO" id="PR:Q86H13"/>
<dbReference type="Proteomes" id="UP000002195">
    <property type="component" value="Chromosome 5"/>
</dbReference>
<dbReference type="GO" id="GO:0005576">
    <property type="term" value="C:extracellular region"/>
    <property type="evidence" value="ECO:0000304"/>
    <property type="project" value="dictyBase"/>
</dbReference>
<dbReference type="GO" id="GO:0005886">
    <property type="term" value="C:plasma membrane"/>
    <property type="evidence" value="ECO:0000314"/>
    <property type="project" value="dictyBase"/>
</dbReference>
<dbReference type="GO" id="GO:0004115">
    <property type="term" value="F:3',5'-cyclic-AMP phosphodiesterase activity"/>
    <property type="evidence" value="ECO:0000315"/>
    <property type="project" value="dictyBase"/>
</dbReference>
<dbReference type="GO" id="GO:0047555">
    <property type="term" value="F:3',5'-cyclic-GMP phosphodiesterase activity"/>
    <property type="evidence" value="ECO:0000318"/>
    <property type="project" value="GO_Central"/>
</dbReference>
<dbReference type="GO" id="GO:0030552">
    <property type="term" value="F:cAMP binding"/>
    <property type="evidence" value="ECO:0007669"/>
    <property type="project" value="UniProtKB-KW"/>
</dbReference>
<dbReference type="GO" id="GO:0046872">
    <property type="term" value="F:metal ion binding"/>
    <property type="evidence" value="ECO:0007669"/>
    <property type="project" value="UniProtKB-KW"/>
</dbReference>
<dbReference type="GO" id="GO:0019933">
    <property type="term" value="P:cAMP-mediated signaling"/>
    <property type="evidence" value="ECO:0000318"/>
    <property type="project" value="GO_Central"/>
</dbReference>
<dbReference type="GO" id="GO:0031000">
    <property type="term" value="P:response to caffeine"/>
    <property type="evidence" value="ECO:0000314"/>
    <property type="project" value="dictyBase"/>
</dbReference>
<dbReference type="GO" id="GO:0030587">
    <property type="term" value="P:sorocarp development"/>
    <property type="evidence" value="ECO:0000315"/>
    <property type="project" value="dictyBase"/>
</dbReference>
<dbReference type="CDD" id="cd00077">
    <property type="entry name" value="HDc"/>
    <property type="match status" value="1"/>
</dbReference>
<dbReference type="Gene3D" id="1.10.1300.10">
    <property type="entry name" value="3'5'-cyclic nucleotide phosphodiesterase, catalytic domain"/>
    <property type="match status" value="1"/>
</dbReference>
<dbReference type="InterPro" id="IPR003607">
    <property type="entry name" value="HD/PDEase_dom"/>
</dbReference>
<dbReference type="InterPro" id="IPR023088">
    <property type="entry name" value="PDEase"/>
</dbReference>
<dbReference type="InterPro" id="IPR002073">
    <property type="entry name" value="PDEase_catalytic_dom"/>
</dbReference>
<dbReference type="InterPro" id="IPR036971">
    <property type="entry name" value="PDEase_catalytic_dom_sf"/>
</dbReference>
<dbReference type="InterPro" id="IPR023174">
    <property type="entry name" value="PDEase_CS"/>
</dbReference>
<dbReference type="PANTHER" id="PTHR11347">
    <property type="entry name" value="CYCLIC NUCLEOTIDE PHOSPHODIESTERASE"/>
    <property type="match status" value="1"/>
</dbReference>
<dbReference type="Pfam" id="PF00233">
    <property type="entry name" value="PDEase_I"/>
    <property type="match status" value="1"/>
</dbReference>
<dbReference type="PRINTS" id="PR00387">
    <property type="entry name" value="PDIESTERASE1"/>
</dbReference>
<dbReference type="SUPFAM" id="SSF109604">
    <property type="entry name" value="HD-domain/PDEase-like"/>
    <property type="match status" value="1"/>
</dbReference>
<dbReference type="PROSITE" id="PS00126">
    <property type="entry name" value="PDEASE_I_1"/>
    <property type="match status" value="1"/>
</dbReference>
<dbReference type="PROSITE" id="PS51845">
    <property type="entry name" value="PDEASE_I_2"/>
    <property type="match status" value="1"/>
</dbReference>
<accession>Q86H13</accession>
<accession>Q54HY3</accession>
<accession>Q54HY4</accession>
<protein>
    <recommendedName>
        <fullName evidence="7">3',5'-cyclic-AMP phosphodiesterase 4</fullName>
        <ecNumber evidence="5">3.1.4.53</ecNumber>
    </recommendedName>
    <alternativeName>
        <fullName>Phosphodiesterase 4</fullName>
        <shortName evidence="6">DdPDE4</shortName>
    </alternativeName>
    <alternativeName>
        <fullName evidence="6">cAMP-specific phosphodiesterase 4</fullName>
    </alternativeName>
</protein>
<feature type="signal peptide" evidence="2">
    <location>
        <begin position="1"/>
        <end position="29"/>
    </location>
</feature>
<feature type="chain" id="PRO_0000363970" description="3',5'-cyclic-AMP phosphodiesterase 4">
    <location>
        <begin position="30"/>
        <end position="1039"/>
    </location>
</feature>
<feature type="topological domain" description="Extracellular" evidence="2">
    <location>
        <begin position="30"/>
        <end position="201"/>
    </location>
</feature>
<feature type="transmembrane region" description="Helical" evidence="2">
    <location>
        <begin position="202"/>
        <end position="222"/>
    </location>
</feature>
<feature type="topological domain" description="Cytoplasmic" evidence="2">
    <location>
        <begin position="223"/>
        <end position="226"/>
    </location>
</feature>
<feature type="transmembrane region" description="Helical" evidence="2">
    <location>
        <begin position="227"/>
        <end position="247"/>
    </location>
</feature>
<feature type="topological domain" description="Extracellular" evidence="2">
    <location>
        <begin position="248"/>
        <end position="256"/>
    </location>
</feature>
<feature type="transmembrane region" description="Helical" evidence="2">
    <location>
        <begin position="257"/>
        <end position="277"/>
    </location>
</feature>
<feature type="topological domain" description="Cytoplasmic" evidence="2">
    <location>
        <begin position="278"/>
        <end position="283"/>
    </location>
</feature>
<feature type="transmembrane region" description="Helical" evidence="2">
    <location>
        <begin position="284"/>
        <end position="304"/>
    </location>
</feature>
<feature type="topological domain" description="Extracellular" evidence="2">
    <location>
        <begin position="305"/>
        <end position="310"/>
    </location>
</feature>
<feature type="transmembrane region" description="Helical" evidence="2">
    <location>
        <begin position="311"/>
        <end position="331"/>
    </location>
</feature>
<feature type="topological domain" description="Cytoplasmic" evidence="2">
    <location>
        <begin position="332"/>
        <end position="356"/>
    </location>
</feature>
<feature type="transmembrane region" description="Helical" evidence="2">
    <location>
        <begin position="357"/>
        <end position="377"/>
    </location>
</feature>
<feature type="topological domain" description="Extracellular" evidence="2">
    <location>
        <begin position="378"/>
        <end position="1039"/>
    </location>
</feature>
<feature type="domain" description="PDEase" evidence="3">
    <location>
        <begin position="533"/>
        <end position="973"/>
    </location>
</feature>
<feature type="region of interest" description="Disordered" evidence="4">
    <location>
        <begin position="40"/>
        <end position="63"/>
    </location>
</feature>
<feature type="region of interest" description="Disordered" evidence="4">
    <location>
        <begin position="116"/>
        <end position="181"/>
    </location>
</feature>
<feature type="region of interest" description="Disordered" evidence="4">
    <location>
        <begin position="738"/>
        <end position="835"/>
    </location>
</feature>
<feature type="region of interest" description="Disordered" evidence="4">
    <location>
        <begin position="978"/>
        <end position="1033"/>
    </location>
</feature>
<feature type="coiled-coil region" evidence="2">
    <location>
        <begin position="384"/>
        <end position="414"/>
    </location>
</feature>
<feature type="compositionally biased region" description="Low complexity" evidence="4">
    <location>
        <begin position="45"/>
        <end position="63"/>
    </location>
</feature>
<feature type="compositionally biased region" description="Low complexity" evidence="4">
    <location>
        <begin position="740"/>
        <end position="835"/>
    </location>
</feature>
<feature type="compositionally biased region" description="Low complexity" evidence="4">
    <location>
        <begin position="978"/>
        <end position="1019"/>
    </location>
</feature>
<feature type="compositionally biased region" description="Polar residues" evidence="4">
    <location>
        <begin position="1020"/>
        <end position="1033"/>
    </location>
</feature>
<feature type="active site" description="Proton donor" evidence="3">
    <location>
        <position position="609"/>
    </location>
</feature>
<feature type="binding site" evidence="3">
    <location>
        <position position="613"/>
    </location>
    <ligand>
        <name>a divalent metal cation</name>
        <dbReference type="ChEBI" id="CHEBI:60240"/>
        <label>1</label>
    </ligand>
</feature>
<feature type="binding site" evidence="3">
    <location>
        <position position="648"/>
    </location>
    <ligand>
        <name>a divalent metal cation</name>
        <dbReference type="ChEBI" id="CHEBI:60240"/>
        <label>1</label>
    </ligand>
</feature>
<feature type="binding site" evidence="3">
    <location>
        <position position="649"/>
    </location>
    <ligand>
        <name>a divalent metal cation</name>
        <dbReference type="ChEBI" id="CHEBI:60240"/>
        <label>1</label>
    </ligand>
</feature>
<feature type="binding site" evidence="3">
    <location>
        <position position="649"/>
    </location>
    <ligand>
        <name>a divalent metal cation</name>
        <dbReference type="ChEBI" id="CHEBI:60240"/>
        <label>2</label>
    </ligand>
</feature>
<feature type="binding site" evidence="3">
    <location>
        <position position="861"/>
    </location>
    <ligand>
        <name>a divalent metal cation</name>
        <dbReference type="ChEBI" id="CHEBI:60240"/>
        <label>1</label>
    </ligand>
</feature>
<feature type="glycosylation site" description="N-linked (GlcNAc...) asparagine" evidence="2">
    <location>
        <position position="11"/>
    </location>
</feature>
<feature type="glycosylation site" description="N-linked (GlcNAc...) asparagine" evidence="2">
    <location>
        <position position="34"/>
    </location>
</feature>
<feature type="glycosylation site" description="N-linked (GlcNAc...) asparagine" evidence="2">
    <location>
        <position position="37"/>
    </location>
</feature>
<feature type="glycosylation site" description="N-linked (GlcNAc...) asparagine" evidence="2">
    <location>
        <position position="119"/>
    </location>
</feature>
<feature type="glycosylation site" description="N-linked (GlcNAc...) asparagine" evidence="2">
    <location>
        <position position="124"/>
    </location>
</feature>
<feature type="glycosylation site" description="N-linked (GlcNAc...) asparagine" evidence="2">
    <location>
        <position position="131"/>
    </location>
</feature>
<feature type="glycosylation site" description="N-linked (GlcNAc...) asparagine" evidence="2">
    <location>
        <position position="167"/>
    </location>
</feature>
<feature type="glycosylation site" description="N-linked (GlcNAc...) asparagine" evidence="2">
    <location>
        <position position="178"/>
    </location>
</feature>
<feature type="glycosylation site" description="N-linked (GlcNAc...) asparagine" evidence="2">
    <location>
        <position position="406"/>
    </location>
</feature>
<feature type="glycosylation site" description="N-linked (GlcNAc...) asparagine" evidence="2">
    <location>
        <position position="430"/>
    </location>
</feature>
<feature type="glycosylation site" description="N-linked (GlcNAc...) asparagine" evidence="2">
    <location>
        <position position="500"/>
    </location>
</feature>
<feature type="glycosylation site" description="N-linked (GlcNAc...) asparagine" evidence="2">
    <location>
        <position position="515"/>
    </location>
</feature>
<feature type="glycosylation site" description="N-linked (GlcNAc...) asparagine" evidence="2">
    <location>
        <position position="769"/>
    </location>
</feature>
<feature type="glycosylation site" description="N-linked (GlcNAc...) asparagine" evidence="2">
    <location>
        <position position="791"/>
    </location>
</feature>
<feature type="glycosylation site" description="N-linked (GlcNAc...) asparagine" evidence="2">
    <location>
        <position position="795"/>
    </location>
</feature>
<feature type="glycosylation site" description="N-linked (GlcNAc...) asparagine" evidence="2">
    <location>
        <position position="804"/>
    </location>
</feature>
<feature type="glycosylation site" description="N-linked (GlcNAc...) asparagine" evidence="2">
    <location>
        <position position="809"/>
    </location>
</feature>
<feature type="glycosylation site" description="N-linked (GlcNAc...) asparagine" evidence="2">
    <location>
        <position position="823"/>
    </location>
</feature>
<feature type="glycosylation site" description="N-linked (GlcNAc...) asparagine" evidence="2">
    <location>
        <position position="826"/>
    </location>
</feature>
<feature type="glycosylation site" description="N-linked (GlcNAc...) asparagine" evidence="2">
    <location>
        <position position="874"/>
    </location>
</feature>
<feature type="glycosylation site" description="N-linked (GlcNAc...) asparagine" evidence="2">
    <location>
        <position position="944"/>
    </location>
</feature>
<feature type="glycosylation site" description="N-linked (GlcNAc...) asparagine" evidence="2">
    <location>
        <position position="1018"/>
    </location>
</feature>
<feature type="glycosylation site" description="N-linked (GlcNAc...) asparagine" evidence="2">
    <location>
        <position position="1023"/>
    </location>
</feature>
<feature type="sequence conflict" description="In Ref. 2; AAO59486." evidence="7" ref="2">
    <original>Y</original>
    <variation>D</variation>
    <location>
        <position position="284"/>
    </location>
</feature>
<keyword id="KW-0114">cAMP</keyword>
<keyword id="KW-0116">cAMP-binding</keyword>
<keyword id="KW-1003">Cell membrane</keyword>
<keyword id="KW-0175">Coiled coil</keyword>
<keyword id="KW-0325">Glycoprotein</keyword>
<keyword id="KW-0378">Hydrolase</keyword>
<keyword id="KW-0472">Membrane</keyword>
<keyword id="KW-0479">Metal-binding</keyword>
<keyword id="KW-0547">Nucleotide-binding</keyword>
<keyword id="KW-1185">Reference proteome</keyword>
<keyword id="KW-0732">Signal</keyword>
<keyword id="KW-0812">Transmembrane</keyword>
<keyword id="KW-1133">Transmembrane helix</keyword>
<proteinExistence type="evidence at protein level"/>
<gene>
    <name type="primary">Pde4</name>
    <name type="ORF">DDB_G0289121</name>
</gene>
<comment type="function">
    <text evidence="5">Phosphodiesterase specific for extracellular cAMP. Involved in the degradation of extracellular cAMP specifically during multicellular development.</text>
</comment>
<comment type="catalytic activity">
    <reaction evidence="5">
        <text>3',5'-cyclic AMP + H2O = AMP + H(+)</text>
        <dbReference type="Rhea" id="RHEA:25277"/>
        <dbReference type="ChEBI" id="CHEBI:15377"/>
        <dbReference type="ChEBI" id="CHEBI:15378"/>
        <dbReference type="ChEBI" id="CHEBI:58165"/>
        <dbReference type="ChEBI" id="CHEBI:456215"/>
        <dbReference type="EC" id="3.1.4.53"/>
    </reaction>
    <physiologicalReaction direction="left-to-right" evidence="5">
        <dbReference type="Rhea" id="RHEA:25278"/>
    </physiologicalReaction>
</comment>
<comment type="cofactor">
    <cofactor evidence="1">
        <name>a divalent metal cation</name>
        <dbReference type="ChEBI" id="CHEBI:60240"/>
    </cofactor>
    <text evidence="1">Binds 2 divalent metal cations per subunit. Site 1 may preferentially bind zinc ions, while site 2 has a preference for magnesium and/or manganese ions.</text>
</comment>
<comment type="activity regulation">
    <text evidence="5">Inhibited by 3-isobutyl-1-methylxanthine (IBMX).</text>
</comment>
<comment type="biophysicochemical properties">
    <kinetics>
        <KM evidence="5">10 uM for cAMP (catalytic domain expressed in vegetative AX2 cells)</KM>
        <Vmax evidence="5">4200.0 pmol/min/mg enzyme with cAMP as substrate</Vmax>
    </kinetics>
</comment>
<comment type="subcellular location">
    <subcellularLocation>
        <location evidence="5">Cell membrane</location>
        <topology evidence="7">Multi-pass membrane protein</topology>
    </subcellularLocation>
</comment>
<comment type="developmental stage">
    <text evidence="5">Low expression during growth and cell aggregation (up to 6 hours), maximally increases after 9 hours of starvation, during the mound stage. Remains expressed at significant levels during the other stages of multicellular development.</text>
</comment>
<comment type="disruption phenotype">
    <text evidence="5">Null cells show a reduction of phosphodiesterase activity on the cell surface. Aggregation speed is similar, but from the mound stage until fruiting body formation it is slower. Aggregates largely remain as mounds; after 15 hours (compared to slugs in wild type cells), after 20 hours (compared to culmination state in wild type cells) and after 27 hours (compared to completion of fruiting body formation in wild type cells). Thus, slug formation and culmination appear to be affected. These processes were not only slower but also less slugs and fruiting bodies are formed.</text>
</comment>
<comment type="similarity">
    <text evidence="7">Belongs to the cyclic nucleotide phosphodiesterase family.</text>
</comment>
<comment type="sequence caution" evidence="7">
    <conflict type="erroneous initiation">
        <sequence resource="EMBL-CDS" id="AAO59486"/>
    </conflict>
    <text>Extended N-terminus.</text>
</comment>
<comment type="sequence caution" evidence="7">
    <conflict type="erroneous gene model prediction">
        <sequence resource="EMBL-CDS" id="EAL62868"/>
    </conflict>
</comment>
<comment type="sequence caution" evidence="7">
    <conflict type="erroneous gene model prediction">
        <sequence resource="EMBL-CDS" id="EAL62884"/>
    </conflict>
</comment>
<name>PDE4_DICDI</name>
<reference key="1">
    <citation type="journal article" date="2005" name="Nature">
        <title>The genome of the social amoeba Dictyostelium discoideum.</title>
        <authorList>
            <person name="Eichinger L."/>
            <person name="Pachebat J.A."/>
            <person name="Gloeckner G."/>
            <person name="Rajandream M.A."/>
            <person name="Sucgang R."/>
            <person name="Berriman M."/>
            <person name="Song J."/>
            <person name="Olsen R."/>
            <person name="Szafranski K."/>
            <person name="Xu Q."/>
            <person name="Tunggal B."/>
            <person name="Kummerfeld S."/>
            <person name="Madera M."/>
            <person name="Konfortov B.A."/>
            <person name="Rivero F."/>
            <person name="Bankier A.T."/>
            <person name="Lehmann R."/>
            <person name="Hamlin N."/>
            <person name="Davies R."/>
            <person name="Gaudet P."/>
            <person name="Fey P."/>
            <person name="Pilcher K."/>
            <person name="Chen G."/>
            <person name="Saunders D."/>
            <person name="Sodergren E.J."/>
            <person name="Davis P."/>
            <person name="Kerhornou A."/>
            <person name="Nie X."/>
            <person name="Hall N."/>
            <person name="Anjard C."/>
            <person name="Hemphill L."/>
            <person name="Bason N."/>
            <person name="Farbrother P."/>
            <person name="Desany B."/>
            <person name="Just E."/>
            <person name="Morio T."/>
            <person name="Rost R."/>
            <person name="Churcher C.M."/>
            <person name="Cooper J."/>
            <person name="Haydock S."/>
            <person name="van Driessche N."/>
            <person name="Cronin A."/>
            <person name="Goodhead I."/>
            <person name="Muzny D.M."/>
            <person name="Mourier T."/>
            <person name="Pain A."/>
            <person name="Lu M."/>
            <person name="Harper D."/>
            <person name="Lindsay R."/>
            <person name="Hauser H."/>
            <person name="James K.D."/>
            <person name="Quiles M."/>
            <person name="Madan Babu M."/>
            <person name="Saito T."/>
            <person name="Buchrieser C."/>
            <person name="Wardroper A."/>
            <person name="Felder M."/>
            <person name="Thangavelu M."/>
            <person name="Johnson D."/>
            <person name="Knights A."/>
            <person name="Loulseged H."/>
            <person name="Mungall K.L."/>
            <person name="Oliver K."/>
            <person name="Price C."/>
            <person name="Quail M.A."/>
            <person name="Urushihara H."/>
            <person name="Hernandez J."/>
            <person name="Rabbinowitsch E."/>
            <person name="Steffen D."/>
            <person name="Sanders M."/>
            <person name="Ma J."/>
            <person name="Kohara Y."/>
            <person name="Sharp S."/>
            <person name="Simmonds M.N."/>
            <person name="Spiegler S."/>
            <person name="Tivey A."/>
            <person name="Sugano S."/>
            <person name="White B."/>
            <person name="Walker D."/>
            <person name="Woodward J.R."/>
            <person name="Winckler T."/>
            <person name="Tanaka Y."/>
            <person name="Shaulsky G."/>
            <person name="Schleicher M."/>
            <person name="Weinstock G.M."/>
            <person name="Rosenthal A."/>
            <person name="Cox E.C."/>
            <person name="Chisholm R.L."/>
            <person name="Gibbs R.A."/>
            <person name="Loomis W.F."/>
            <person name="Platzer M."/>
            <person name="Kay R.R."/>
            <person name="Williams J.G."/>
            <person name="Dear P.H."/>
            <person name="Noegel A.A."/>
            <person name="Barrell B.G."/>
            <person name="Kuspa A."/>
        </authorList>
    </citation>
    <scope>NUCLEOTIDE SEQUENCE [LARGE SCALE GENOMIC DNA]</scope>
    <source>
        <strain>AX4</strain>
    </source>
</reference>
<reference key="2">
    <citation type="journal article" date="2006" name="J. Biol. Chem.">
        <title>DdPDE4, a novel cAMP-specific phosphodiesterase at the surface of dictyostelium cells.</title>
        <authorList>
            <person name="Bader S."/>
            <person name="Kortholt A."/>
            <person name="Snippe H."/>
            <person name="Van Haastert P.J.M."/>
        </authorList>
    </citation>
    <scope>NUCLEOTIDE SEQUENCE [MRNA] OF 283-1039</scope>
    <scope>FUNCTION</scope>
    <scope>CATALYTIC ACTIVITY</scope>
    <scope>BIOPHYSICOCHEMICAL PROPERTIES</scope>
    <scope>CHARACTERIZATION</scope>
    <scope>DEVELOPMENTAL STAGE</scope>
    <scope>ACTIVITY REGULATION</scope>
    <scope>SUBCELLULAR LOCATION</scope>
    <scope>DISRUPTION PHENOTYPE</scope>
</reference>
<reference key="3">
    <citation type="journal article" date="2002" name="Mol. Biol. Cell">
        <title>Identification and characterization of two unusual cGMP-stimulated phosphodiesterases in dictyostelium.</title>
        <authorList>
            <person name="Bosgraaf L."/>
            <person name="Russcher H."/>
            <person name="Snippe H."/>
            <person name="Bader S."/>
            <person name="Wind J."/>
            <person name="Van Haastert P.J.M."/>
        </authorList>
    </citation>
    <scope>SUBCELLULAR LOCATION</scope>
</reference>
<reference key="4">
    <citation type="journal article" date="2007" name="Biochem. J.">
        <title>Seven Dictyostelium discoideum phosphodiesterases degrade three pools of cAMP and cGMP.</title>
        <authorList>
            <person name="Bader S."/>
            <person name="Kortholt A."/>
            <person name="Van Haastert P.J.M."/>
        </authorList>
    </citation>
    <scope>SUBCELLULAR LOCATION</scope>
</reference>